<protein>
    <recommendedName>
        <fullName evidence="1">Transcription antitermination protein NusB</fullName>
    </recommendedName>
    <alternativeName>
        <fullName evidence="1">Antitermination factor NusB</fullName>
    </alternativeName>
</protein>
<dbReference type="EMBL" id="CP000703">
    <property type="protein sequence ID" value="ABQ49376.1"/>
    <property type="molecule type" value="Genomic_DNA"/>
</dbReference>
<dbReference type="RefSeq" id="WP_000087385.1">
    <property type="nucleotide sequence ID" value="NC_009487.1"/>
</dbReference>
<dbReference type="SMR" id="A5IT53"/>
<dbReference type="KEGG" id="saj:SaurJH9_1583"/>
<dbReference type="HOGENOM" id="CLU_087843_3_3_9"/>
<dbReference type="GO" id="GO:0005829">
    <property type="term" value="C:cytosol"/>
    <property type="evidence" value="ECO:0007669"/>
    <property type="project" value="TreeGrafter"/>
</dbReference>
<dbReference type="GO" id="GO:0003723">
    <property type="term" value="F:RNA binding"/>
    <property type="evidence" value="ECO:0007669"/>
    <property type="project" value="UniProtKB-UniRule"/>
</dbReference>
<dbReference type="GO" id="GO:0006353">
    <property type="term" value="P:DNA-templated transcription termination"/>
    <property type="evidence" value="ECO:0007669"/>
    <property type="project" value="UniProtKB-UniRule"/>
</dbReference>
<dbReference type="GO" id="GO:0031564">
    <property type="term" value="P:transcription antitermination"/>
    <property type="evidence" value="ECO:0007669"/>
    <property type="project" value="UniProtKB-KW"/>
</dbReference>
<dbReference type="FunFam" id="1.10.940.10:FF:000011">
    <property type="entry name" value="Transcription antitermination protein NusB"/>
    <property type="match status" value="1"/>
</dbReference>
<dbReference type="Gene3D" id="1.10.940.10">
    <property type="entry name" value="NusB-like"/>
    <property type="match status" value="1"/>
</dbReference>
<dbReference type="HAMAP" id="MF_00073">
    <property type="entry name" value="NusB"/>
    <property type="match status" value="1"/>
</dbReference>
<dbReference type="InterPro" id="IPR035926">
    <property type="entry name" value="NusB-like_sf"/>
</dbReference>
<dbReference type="InterPro" id="IPR011605">
    <property type="entry name" value="NusB_fam"/>
</dbReference>
<dbReference type="InterPro" id="IPR006027">
    <property type="entry name" value="NusB_RsmB_TIM44"/>
</dbReference>
<dbReference type="NCBIfam" id="TIGR01951">
    <property type="entry name" value="nusB"/>
    <property type="match status" value="1"/>
</dbReference>
<dbReference type="PANTHER" id="PTHR11078:SF3">
    <property type="entry name" value="ANTITERMINATION NUSB DOMAIN-CONTAINING PROTEIN"/>
    <property type="match status" value="1"/>
</dbReference>
<dbReference type="PANTHER" id="PTHR11078">
    <property type="entry name" value="N UTILIZATION SUBSTANCE PROTEIN B-RELATED"/>
    <property type="match status" value="1"/>
</dbReference>
<dbReference type="Pfam" id="PF01029">
    <property type="entry name" value="NusB"/>
    <property type="match status" value="1"/>
</dbReference>
<dbReference type="SUPFAM" id="SSF48013">
    <property type="entry name" value="NusB-like"/>
    <property type="match status" value="1"/>
</dbReference>
<accession>A5IT53</accession>
<sequence length="129" mass="15061">MSRKESRVQAFQTLFQLEMKDSDLTINEAISFIKDDNPDLDFEFIHWLVSGVKDHEPVLDETISPYLKDWTIARLLKTDRIILRMATYEILHSDTPAKVVMNEAVELTKQFSDDDHYKFINGVLSNIKK</sequence>
<name>NUSB_STAA9</name>
<comment type="function">
    <text evidence="1">Involved in transcription antitermination. Required for transcription of ribosomal RNA (rRNA) genes. Binds specifically to the boxA antiterminator sequence of the ribosomal RNA (rrn) operons.</text>
</comment>
<comment type="similarity">
    <text evidence="1">Belongs to the NusB family.</text>
</comment>
<keyword id="KW-0694">RNA-binding</keyword>
<keyword id="KW-0804">Transcription</keyword>
<keyword id="KW-0889">Transcription antitermination</keyword>
<keyword id="KW-0805">Transcription regulation</keyword>
<organism>
    <name type="scientific">Staphylococcus aureus (strain JH9)</name>
    <dbReference type="NCBI Taxonomy" id="359786"/>
    <lineage>
        <taxon>Bacteria</taxon>
        <taxon>Bacillati</taxon>
        <taxon>Bacillota</taxon>
        <taxon>Bacilli</taxon>
        <taxon>Bacillales</taxon>
        <taxon>Staphylococcaceae</taxon>
        <taxon>Staphylococcus</taxon>
    </lineage>
</organism>
<reference key="1">
    <citation type="submission" date="2007-05" db="EMBL/GenBank/DDBJ databases">
        <title>Complete sequence of chromosome of Staphylococcus aureus subsp. aureus JH9.</title>
        <authorList>
            <consortium name="US DOE Joint Genome Institute"/>
            <person name="Copeland A."/>
            <person name="Lucas S."/>
            <person name="Lapidus A."/>
            <person name="Barry K."/>
            <person name="Detter J.C."/>
            <person name="Glavina del Rio T."/>
            <person name="Hammon N."/>
            <person name="Israni S."/>
            <person name="Pitluck S."/>
            <person name="Chain P."/>
            <person name="Malfatti S."/>
            <person name="Shin M."/>
            <person name="Vergez L."/>
            <person name="Schmutz J."/>
            <person name="Larimer F."/>
            <person name="Land M."/>
            <person name="Hauser L."/>
            <person name="Kyrpides N."/>
            <person name="Kim E."/>
            <person name="Tomasz A."/>
            <person name="Richardson P."/>
        </authorList>
    </citation>
    <scope>NUCLEOTIDE SEQUENCE [LARGE SCALE GENOMIC DNA]</scope>
    <source>
        <strain>JH9</strain>
    </source>
</reference>
<feature type="chain" id="PRO_1000075209" description="Transcription antitermination protein NusB">
    <location>
        <begin position="1"/>
        <end position="129"/>
    </location>
</feature>
<gene>
    <name evidence="1" type="primary">nusB</name>
    <name type="ordered locus">SaurJH9_1583</name>
</gene>
<evidence type="ECO:0000255" key="1">
    <source>
        <dbReference type="HAMAP-Rule" id="MF_00073"/>
    </source>
</evidence>
<proteinExistence type="inferred from homology"/>